<dbReference type="EC" id="2.7.7.72" evidence="1"/>
<dbReference type="EMBL" id="CP000560">
    <property type="protein sequence ID" value="ABS74422.1"/>
    <property type="molecule type" value="Genomic_DNA"/>
</dbReference>
<dbReference type="RefSeq" id="WP_012117847.1">
    <property type="nucleotide sequence ID" value="NC_009725.2"/>
</dbReference>
<dbReference type="SMR" id="A7Z5Z6"/>
<dbReference type="GeneID" id="93081195"/>
<dbReference type="KEGG" id="bay:RBAM_020600"/>
<dbReference type="HOGENOM" id="CLU_015961_3_0_9"/>
<dbReference type="Proteomes" id="UP000001120">
    <property type="component" value="Chromosome"/>
</dbReference>
<dbReference type="GO" id="GO:0005524">
    <property type="term" value="F:ATP binding"/>
    <property type="evidence" value="ECO:0007669"/>
    <property type="project" value="UniProtKB-UniRule"/>
</dbReference>
<dbReference type="GO" id="GO:0004810">
    <property type="term" value="F:CCA tRNA nucleotidyltransferase activity"/>
    <property type="evidence" value="ECO:0007669"/>
    <property type="project" value="UniProtKB-UniRule"/>
</dbReference>
<dbReference type="GO" id="GO:0000287">
    <property type="term" value="F:magnesium ion binding"/>
    <property type="evidence" value="ECO:0007669"/>
    <property type="project" value="UniProtKB-UniRule"/>
</dbReference>
<dbReference type="GO" id="GO:0000049">
    <property type="term" value="F:tRNA binding"/>
    <property type="evidence" value="ECO:0007669"/>
    <property type="project" value="UniProtKB-UniRule"/>
</dbReference>
<dbReference type="GO" id="GO:0042245">
    <property type="term" value="P:RNA repair"/>
    <property type="evidence" value="ECO:0007669"/>
    <property type="project" value="UniProtKB-KW"/>
</dbReference>
<dbReference type="GO" id="GO:0001680">
    <property type="term" value="P:tRNA 3'-terminal CCA addition"/>
    <property type="evidence" value="ECO:0007669"/>
    <property type="project" value="UniProtKB-UniRule"/>
</dbReference>
<dbReference type="CDD" id="cd05398">
    <property type="entry name" value="NT_ClassII-CCAase"/>
    <property type="match status" value="1"/>
</dbReference>
<dbReference type="Gene3D" id="1.10.110.30">
    <property type="match status" value="1"/>
</dbReference>
<dbReference type="Gene3D" id="1.10.246.80">
    <property type="match status" value="1"/>
</dbReference>
<dbReference type="Gene3D" id="1.20.58.560">
    <property type="match status" value="1"/>
</dbReference>
<dbReference type="Gene3D" id="3.30.460.10">
    <property type="entry name" value="Beta Polymerase, domain 2"/>
    <property type="match status" value="1"/>
</dbReference>
<dbReference type="HAMAP" id="MF_01263">
    <property type="entry name" value="CCA_bact_type3"/>
    <property type="match status" value="1"/>
</dbReference>
<dbReference type="InterPro" id="IPR050264">
    <property type="entry name" value="Bact_CCA-adding_enz_type3_sf"/>
</dbReference>
<dbReference type="InterPro" id="IPR032810">
    <property type="entry name" value="CCA-adding_enz_C"/>
</dbReference>
<dbReference type="InterPro" id="IPR023068">
    <property type="entry name" value="CCA-adding_enz_firmicutes"/>
</dbReference>
<dbReference type="InterPro" id="IPR043519">
    <property type="entry name" value="NT_sf"/>
</dbReference>
<dbReference type="InterPro" id="IPR002646">
    <property type="entry name" value="PolA_pol_head_dom"/>
</dbReference>
<dbReference type="InterPro" id="IPR032828">
    <property type="entry name" value="PolyA_RNA-bd"/>
</dbReference>
<dbReference type="NCBIfam" id="NF009814">
    <property type="entry name" value="PRK13299.1"/>
    <property type="match status" value="1"/>
</dbReference>
<dbReference type="PANTHER" id="PTHR46173">
    <property type="entry name" value="CCA TRNA NUCLEOTIDYLTRANSFERASE 1, MITOCHONDRIAL"/>
    <property type="match status" value="1"/>
</dbReference>
<dbReference type="PANTHER" id="PTHR46173:SF1">
    <property type="entry name" value="CCA TRNA NUCLEOTIDYLTRANSFERASE 1, MITOCHONDRIAL"/>
    <property type="match status" value="1"/>
</dbReference>
<dbReference type="Pfam" id="PF01743">
    <property type="entry name" value="PolyA_pol"/>
    <property type="match status" value="1"/>
</dbReference>
<dbReference type="Pfam" id="PF12627">
    <property type="entry name" value="PolyA_pol_RNAbd"/>
    <property type="match status" value="1"/>
</dbReference>
<dbReference type="Pfam" id="PF13735">
    <property type="entry name" value="tRNA_NucTran2_2"/>
    <property type="match status" value="1"/>
</dbReference>
<dbReference type="SUPFAM" id="SSF81301">
    <property type="entry name" value="Nucleotidyltransferase"/>
    <property type="match status" value="1"/>
</dbReference>
<dbReference type="SUPFAM" id="SSF81891">
    <property type="entry name" value="Poly A polymerase C-terminal region-like"/>
    <property type="match status" value="1"/>
</dbReference>
<keyword id="KW-0067">ATP-binding</keyword>
<keyword id="KW-0460">Magnesium</keyword>
<keyword id="KW-0479">Metal-binding</keyword>
<keyword id="KW-0547">Nucleotide-binding</keyword>
<keyword id="KW-0548">Nucleotidyltransferase</keyword>
<keyword id="KW-0692">RNA repair</keyword>
<keyword id="KW-0694">RNA-binding</keyword>
<keyword id="KW-0808">Transferase</keyword>
<keyword id="KW-0819">tRNA processing</keyword>
<feature type="chain" id="PRO_1000054321" description="CCA-adding enzyme">
    <location>
        <begin position="1"/>
        <end position="396"/>
    </location>
</feature>
<feature type="binding site" evidence="1">
    <location>
        <position position="27"/>
    </location>
    <ligand>
        <name>ATP</name>
        <dbReference type="ChEBI" id="CHEBI:30616"/>
    </ligand>
</feature>
<feature type="binding site" evidence="1">
    <location>
        <position position="27"/>
    </location>
    <ligand>
        <name>CTP</name>
        <dbReference type="ChEBI" id="CHEBI:37563"/>
    </ligand>
</feature>
<feature type="binding site" evidence="1">
    <location>
        <position position="30"/>
    </location>
    <ligand>
        <name>ATP</name>
        <dbReference type="ChEBI" id="CHEBI:30616"/>
    </ligand>
</feature>
<feature type="binding site" evidence="1">
    <location>
        <position position="30"/>
    </location>
    <ligand>
        <name>CTP</name>
        <dbReference type="ChEBI" id="CHEBI:37563"/>
    </ligand>
</feature>
<feature type="binding site" evidence="1">
    <location>
        <position position="40"/>
    </location>
    <ligand>
        <name>Mg(2+)</name>
        <dbReference type="ChEBI" id="CHEBI:18420"/>
    </ligand>
</feature>
<feature type="binding site" evidence="1">
    <location>
        <position position="42"/>
    </location>
    <ligand>
        <name>Mg(2+)</name>
        <dbReference type="ChEBI" id="CHEBI:18420"/>
    </ligand>
</feature>
<feature type="binding site" evidence="1">
    <location>
        <position position="111"/>
    </location>
    <ligand>
        <name>ATP</name>
        <dbReference type="ChEBI" id="CHEBI:30616"/>
    </ligand>
</feature>
<feature type="binding site" evidence="1">
    <location>
        <position position="111"/>
    </location>
    <ligand>
        <name>CTP</name>
        <dbReference type="ChEBI" id="CHEBI:37563"/>
    </ligand>
</feature>
<feature type="binding site" evidence="1">
    <location>
        <position position="154"/>
    </location>
    <ligand>
        <name>ATP</name>
        <dbReference type="ChEBI" id="CHEBI:30616"/>
    </ligand>
</feature>
<feature type="binding site" evidence="1">
    <location>
        <position position="154"/>
    </location>
    <ligand>
        <name>CTP</name>
        <dbReference type="ChEBI" id="CHEBI:37563"/>
    </ligand>
</feature>
<feature type="binding site" evidence="1">
    <location>
        <position position="157"/>
    </location>
    <ligand>
        <name>ATP</name>
        <dbReference type="ChEBI" id="CHEBI:30616"/>
    </ligand>
</feature>
<feature type="binding site" evidence="1">
    <location>
        <position position="157"/>
    </location>
    <ligand>
        <name>CTP</name>
        <dbReference type="ChEBI" id="CHEBI:37563"/>
    </ligand>
</feature>
<feature type="binding site" evidence="1">
    <location>
        <position position="160"/>
    </location>
    <ligand>
        <name>ATP</name>
        <dbReference type="ChEBI" id="CHEBI:30616"/>
    </ligand>
</feature>
<feature type="binding site" evidence="1">
    <location>
        <position position="160"/>
    </location>
    <ligand>
        <name>CTP</name>
        <dbReference type="ChEBI" id="CHEBI:37563"/>
    </ligand>
</feature>
<feature type="binding site" evidence="1">
    <location>
        <position position="163"/>
    </location>
    <ligand>
        <name>ATP</name>
        <dbReference type="ChEBI" id="CHEBI:30616"/>
    </ligand>
</feature>
<feature type="binding site" evidence="1">
    <location>
        <position position="163"/>
    </location>
    <ligand>
        <name>CTP</name>
        <dbReference type="ChEBI" id="CHEBI:37563"/>
    </ligand>
</feature>
<protein>
    <recommendedName>
        <fullName evidence="1">CCA-adding enzyme</fullName>
        <ecNumber evidence="1">2.7.7.72</ecNumber>
    </recommendedName>
    <alternativeName>
        <fullName evidence="1">CCA tRNA nucleotidyltransferase</fullName>
    </alternativeName>
    <alternativeName>
        <fullName evidence="1">tRNA CCA-pyrophosphorylase</fullName>
    </alternativeName>
    <alternativeName>
        <fullName evidence="1">tRNA adenylyl-/cytidylyl- transferase</fullName>
    </alternativeName>
    <alternativeName>
        <fullName evidence="1">tRNA nucleotidyltransferase</fullName>
    </alternativeName>
    <alternativeName>
        <fullName evidence="1">tRNA-NT</fullName>
    </alternativeName>
</protein>
<accession>A7Z5Z6</accession>
<evidence type="ECO:0000255" key="1">
    <source>
        <dbReference type="HAMAP-Rule" id="MF_01263"/>
    </source>
</evidence>
<organism>
    <name type="scientific">Bacillus velezensis (strain DSM 23117 / BGSC 10A6 / LMG 26770 / FZB42)</name>
    <name type="common">Bacillus amyloliquefaciens subsp. plantarum</name>
    <dbReference type="NCBI Taxonomy" id="326423"/>
    <lineage>
        <taxon>Bacteria</taxon>
        <taxon>Bacillati</taxon>
        <taxon>Bacillota</taxon>
        <taxon>Bacilli</taxon>
        <taxon>Bacillales</taxon>
        <taxon>Bacillaceae</taxon>
        <taxon>Bacillus</taxon>
        <taxon>Bacillus amyloliquefaciens group</taxon>
    </lineage>
</organism>
<reference key="1">
    <citation type="journal article" date="2007" name="Nat. Biotechnol.">
        <title>Comparative analysis of the complete genome sequence of the plant growth-promoting bacterium Bacillus amyloliquefaciens FZB42.</title>
        <authorList>
            <person name="Chen X.H."/>
            <person name="Koumoutsi A."/>
            <person name="Scholz R."/>
            <person name="Eisenreich A."/>
            <person name="Schneider K."/>
            <person name="Heinemeyer I."/>
            <person name="Morgenstern B."/>
            <person name="Voss B."/>
            <person name="Hess W.R."/>
            <person name="Reva O."/>
            <person name="Junge H."/>
            <person name="Voigt B."/>
            <person name="Jungblut P.R."/>
            <person name="Vater J."/>
            <person name="Suessmuth R."/>
            <person name="Liesegang H."/>
            <person name="Strittmatter A."/>
            <person name="Gottschalk G."/>
            <person name="Borriss R."/>
        </authorList>
    </citation>
    <scope>NUCLEOTIDE SEQUENCE [LARGE SCALE GENOMIC DNA]</scope>
    <source>
        <strain>DSM 23117 / BGSC 10A6 / LMG 26770 / FZB42</strain>
    </source>
</reference>
<name>CCA_BACVZ</name>
<gene>
    <name evidence="1" type="primary">cca</name>
    <name type="ordered locus">RBAM_020600</name>
</gene>
<sequence>MEQEFVKALPILHHLMKAGHQAYFVGGAVRDSYMKRKIGDVDIATSASPNEVERLFKRTVDVGKEHGTVIVLWEDETYEVTTFRAESEYKDYRRPEAVRFITSLSEDLKRRDLTINAMAMSAEGELLDYFGGAHDIGQKLIRTVGNPEDRFREDALRMMRAVRFMSQLGFLLEKETREAVIKDRELLAHVSVERKTVEFEKLLQGASSQEAIQTMVQTGLIQELPGLSGYEQQMLEASGFPFSSLDAREERWAALLLFLGLCPKSAEAFLKQWKLPGKVIKKAMQIISVYPAQLEAEAMYRAGEALFSAVKIGMLKKHKTIDEQKLKEVQSLYEQLPIKSLRDLDISGADLMELRNRRAGKWVAEELRRIEEAVLAGKLPNRKHDIKEWLASWDQH</sequence>
<comment type="function">
    <text evidence="1">Catalyzes the addition and repair of the essential 3'-terminal CCA sequence in tRNAs without using a nucleic acid template. Adds these three nucleotides in the order of C, C, and A to the tRNA nucleotide-73, using CTP and ATP as substrates and producing inorganic pyrophosphate. tRNA 3'-terminal CCA addition is required both for tRNA processing and repair. Also involved in tRNA surveillance by mediating tandem CCA addition to generate a CCACCA at the 3' terminus of unstable tRNAs. While stable tRNAs receive only 3'-terminal CCA, unstable tRNAs are marked with CCACCA and rapidly degraded.</text>
</comment>
<comment type="catalytic activity">
    <reaction evidence="1">
        <text>a tRNA precursor + 2 CTP + ATP = a tRNA with a 3' CCA end + 3 diphosphate</text>
        <dbReference type="Rhea" id="RHEA:14433"/>
        <dbReference type="Rhea" id="RHEA-COMP:10465"/>
        <dbReference type="Rhea" id="RHEA-COMP:10468"/>
        <dbReference type="ChEBI" id="CHEBI:30616"/>
        <dbReference type="ChEBI" id="CHEBI:33019"/>
        <dbReference type="ChEBI" id="CHEBI:37563"/>
        <dbReference type="ChEBI" id="CHEBI:74896"/>
        <dbReference type="ChEBI" id="CHEBI:83071"/>
        <dbReference type="EC" id="2.7.7.72"/>
    </reaction>
</comment>
<comment type="catalytic activity">
    <reaction evidence="1">
        <text>a tRNA with a 3' CCA end + 2 CTP + ATP = a tRNA with a 3' CCACCA end + 3 diphosphate</text>
        <dbReference type="Rhea" id="RHEA:76235"/>
        <dbReference type="Rhea" id="RHEA-COMP:10468"/>
        <dbReference type="Rhea" id="RHEA-COMP:18655"/>
        <dbReference type="ChEBI" id="CHEBI:30616"/>
        <dbReference type="ChEBI" id="CHEBI:33019"/>
        <dbReference type="ChEBI" id="CHEBI:37563"/>
        <dbReference type="ChEBI" id="CHEBI:83071"/>
        <dbReference type="ChEBI" id="CHEBI:195187"/>
    </reaction>
    <physiologicalReaction direction="left-to-right" evidence="1">
        <dbReference type="Rhea" id="RHEA:76236"/>
    </physiologicalReaction>
</comment>
<comment type="cofactor">
    <cofactor evidence="1">
        <name>Mg(2+)</name>
        <dbReference type="ChEBI" id="CHEBI:18420"/>
    </cofactor>
</comment>
<comment type="subunit">
    <text evidence="1">Homodimer.</text>
</comment>
<comment type="miscellaneous">
    <text evidence="1">A single active site specifically recognizes both ATP and CTP and is responsible for their addition.</text>
</comment>
<comment type="similarity">
    <text evidence="1">Belongs to the tRNA nucleotidyltransferase/poly(A) polymerase family. Bacterial CCA-adding enzyme type 3 subfamily.</text>
</comment>
<proteinExistence type="inferred from homology"/>